<reference key="1">
    <citation type="submission" date="2006-12" db="EMBL/GenBank/DDBJ databases">
        <authorList>
            <person name="Fouts D.E."/>
            <person name="Nelson K.E."/>
            <person name="Sebastian Y."/>
        </authorList>
    </citation>
    <scope>NUCLEOTIDE SEQUENCE [LARGE SCALE GENOMIC DNA]</scope>
    <source>
        <strain>81-176</strain>
    </source>
</reference>
<proteinExistence type="inferred from homology"/>
<sequence>MENLIIYAFIYLLGSIPFGLILAKFFAKTDIKKEGSKSIGATNVLRVVKEKNPKLAKKLAIATIILDFAKAAIPLLILKFLHYDQALLWSVAVLAIFGHCFSIYLLFEGGKGIATGAGAMIVLLPLEVLTAFIVWVVIGKIFKISSLASLAALLAFVISSFIFNYDLEIHTHAPVFIIAFIIIYKHLPNIKRLIFKEECKVI</sequence>
<evidence type="ECO:0000255" key="1">
    <source>
        <dbReference type="HAMAP-Rule" id="MF_01043"/>
    </source>
</evidence>
<feature type="chain" id="PRO_1000064165" description="Glycerol-3-phosphate acyltransferase">
    <location>
        <begin position="1"/>
        <end position="202"/>
    </location>
</feature>
<feature type="transmembrane region" description="Helical" evidence="1">
    <location>
        <begin position="3"/>
        <end position="23"/>
    </location>
</feature>
<feature type="transmembrane region" description="Helical" evidence="1">
    <location>
        <begin position="61"/>
        <end position="81"/>
    </location>
</feature>
<feature type="transmembrane region" description="Helical" evidence="1">
    <location>
        <begin position="87"/>
        <end position="107"/>
    </location>
</feature>
<feature type="transmembrane region" description="Helical" evidence="1">
    <location>
        <begin position="118"/>
        <end position="138"/>
    </location>
</feature>
<feature type="transmembrane region" description="Helical" evidence="1">
    <location>
        <begin position="144"/>
        <end position="164"/>
    </location>
</feature>
<feature type="transmembrane region" description="Helical" evidence="1">
    <location>
        <begin position="167"/>
        <end position="187"/>
    </location>
</feature>
<accession>A1VY78</accession>
<comment type="function">
    <text evidence="1">Catalyzes the transfer of an acyl group from acyl-phosphate (acyl-PO(4)) to glycerol-3-phosphate (G3P) to form lysophosphatidic acid (LPA). This enzyme utilizes acyl-phosphate as fatty acyl donor, but not acyl-CoA or acyl-ACP.</text>
</comment>
<comment type="catalytic activity">
    <reaction evidence="1">
        <text>an acyl phosphate + sn-glycerol 3-phosphate = a 1-acyl-sn-glycero-3-phosphate + phosphate</text>
        <dbReference type="Rhea" id="RHEA:34075"/>
        <dbReference type="ChEBI" id="CHEBI:43474"/>
        <dbReference type="ChEBI" id="CHEBI:57597"/>
        <dbReference type="ChEBI" id="CHEBI:57970"/>
        <dbReference type="ChEBI" id="CHEBI:59918"/>
        <dbReference type="EC" id="2.3.1.275"/>
    </reaction>
</comment>
<comment type="pathway">
    <text evidence="1">Lipid metabolism; phospholipid metabolism.</text>
</comment>
<comment type="subunit">
    <text evidence="1">Probably interacts with PlsX.</text>
</comment>
<comment type="subcellular location">
    <subcellularLocation>
        <location evidence="1">Cell inner membrane</location>
        <topology evidence="1">Multi-pass membrane protein</topology>
    </subcellularLocation>
</comment>
<comment type="similarity">
    <text evidence="1">Belongs to the PlsY family.</text>
</comment>
<organism>
    <name type="scientific">Campylobacter jejuni subsp. jejuni serotype O:23/36 (strain 81-176)</name>
    <dbReference type="NCBI Taxonomy" id="354242"/>
    <lineage>
        <taxon>Bacteria</taxon>
        <taxon>Pseudomonadati</taxon>
        <taxon>Campylobacterota</taxon>
        <taxon>Epsilonproteobacteria</taxon>
        <taxon>Campylobacterales</taxon>
        <taxon>Campylobacteraceae</taxon>
        <taxon>Campylobacter</taxon>
    </lineage>
</organism>
<keyword id="KW-0997">Cell inner membrane</keyword>
<keyword id="KW-1003">Cell membrane</keyword>
<keyword id="KW-0444">Lipid biosynthesis</keyword>
<keyword id="KW-0443">Lipid metabolism</keyword>
<keyword id="KW-0472">Membrane</keyword>
<keyword id="KW-0594">Phospholipid biosynthesis</keyword>
<keyword id="KW-1208">Phospholipid metabolism</keyword>
<keyword id="KW-0808">Transferase</keyword>
<keyword id="KW-0812">Transmembrane</keyword>
<keyword id="KW-1133">Transmembrane helix</keyword>
<protein>
    <recommendedName>
        <fullName evidence="1">Glycerol-3-phosphate acyltransferase</fullName>
    </recommendedName>
    <alternativeName>
        <fullName evidence="1">Acyl-PO4 G3P acyltransferase</fullName>
    </alternativeName>
    <alternativeName>
        <fullName evidence="1">Acyl-phosphate--glycerol-3-phosphate acyltransferase</fullName>
    </alternativeName>
    <alternativeName>
        <fullName evidence="1">G3P acyltransferase</fullName>
        <shortName evidence="1">GPAT</shortName>
        <ecNumber evidence="1">2.3.1.275</ecNumber>
    </alternativeName>
    <alternativeName>
        <fullName evidence="1">Lysophosphatidic acid synthase</fullName>
        <shortName evidence="1">LPA synthase</shortName>
    </alternativeName>
</protein>
<gene>
    <name evidence="1" type="primary">plsY</name>
    <name type="ordered locus">CJJ81176_0381</name>
</gene>
<dbReference type="EC" id="2.3.1.275" evidence="1"/>
<dbReference type="EMBL" id="CP000538">
    <property type="protein sequence ID" value="EAQ73235.1"/>
    <property type="molecule type" value="Genomic_DNA"/>
</dbReference>
<dbReference type="RefSeq" id="WP_002857304.1">
    <property type="nucleotide sequence ID" value="NC_008787.1"/>
</dbReference>
<dbReference type="SMR" id="A1VY78"/>
<dbReference type="KEGG" id="cjj:CJJ81176_0381"/>
<dbReference type="eggNOG" id="COG0344">
    <property type="taxonomic scope" value="Bacteria"/>
</dbReference>
<dbReference type="HOGENOM" id="CLU_081254_2_0_7"/>
<dbReference type="UniPathway" id="UPA00085"/>
<dbReference type="Proteomes" id="UP000000646">
    <property type="component" value="Chromosome"/>
</dbReference>
<dbReference type="GO" id="GO:0005886">
    <property type="term" value="C:plasma membrane"/>
    <property type="evidence" value="ECO:0007669"/>
    <property type="project" value="UniProtKB-SubCell"/>
</dbReference>
<dbReference type="GO" id="GO:0043772">
    <property type="term" value="F:acyl-phosphate glycerol-3-phosphate acyltransferase activity"/>
    <property type="evidence" value="ECO:0007669"/>
    <property type="project" value="UniProtKB-UniRule"/>
</dbReference>
<dbReference type="GO" id="GO:0008654">
    <property type="term" value="P:phospholipid biosynthetic process"/>
    <property type="evidence" value="ECO:0007669"/>
    <property type="project" value="UniProtKB-UniRule"/>
</dbReference>
<dbReference type="HAMAP" id="MF_01043">
    <property type="entry name" value="PlsY"/>
    <property type="match status" value="1"/>
</dbReference>
<dbReference type="InterPro" id="IPR003811">
    <property type="entry name" value="G3P_acylTferase_PlsY"/>
</dbReference>
<dbReference type="NCBIfam" id="TIGR00023">
    <property type="entry name" value="glycerol-3-phosphate 1-O-acyltransferase PlsY"/>
    <property type="match status" value="1"/>
</dbReference>
<dbReference type="PANTHER" id="PTHR30309:SF0">
    <property type="entry name" value="GLYCEROL-3-PHOSPHATE ACYLTRANSFERASE-RELATED"/>
    <property type="match status" value="1"/>
</dbReference>
<dbReference type="PANTHER" id="PTHR30309">
    <property type="entry name" value="INNER MEMBRANE PROTEIN YGIH"/>
    <property type="match status" value="1"/>
</dbReference>
<dbReference type="Pfam" id="PF02660">
    <property type="entry name" value="G3P_acyltransf"/>
    <property type="match status" value="1"/>
</dbReference>
<dbReference type="SMART" id="SM01207">
    <property type="entry name" value="G3P_acyltransf"/>
    <property type="match status" value="1"/>
</dbReference>
<name>PLSY_CAMJJ</name>